<dbReference type="EMBL" id="AJ854042">
    <property type="protein sequence ID" value="CAH69402.1"/>
    <property type="molecule type" value="Genomic_DNA"/>
</dbReference>
<dbReference type="RefSeq" id="YP_001496940.1">
    <property type="nucleotide sequence ID" value="NC_009884.1"/>
</dbReference>
<dbReference type="KEGG" id="vg:5656103"/>
<dbReference type="Proteomes" id="UP000006364">
    <property type="component" value="Genome"/>
</dbReference>
<dbReference type="InterPro" id="IPR014061">
    <property type="entry name" value="BrxL-like"/>
</dbReference>
<dbReference type="Pfam" id="PF13337">
    <property type="entry name" value="BrxL_ATPase"/>
    <property type="match status" value="1"/>
</dbReference>
<keyword id="KW-1185">Reference proteome</keyword>
<gene>
    <name type="ORF">ORF425</name>
</gene>
<protein>
    <recommendedName>
        <fullName>Uncharacterized protein ORF425</fullName>
    </recommendedName>
</protein>
<organismHost>
    <name type="scientific">Acidianus sp. F28</name>
    <dbReference type="NCBI Taxonomy" id="315458"/>
</organismHost>
<feature type="chain" id="PRO_0000384531" description="Uncharacterized protein ORF425">
    <location>
        <begin position="1"/>
        <end position="425"/>
    </location>
</feature>
<reference key="1">
    <citation type="journal article" date="2005" name="J. Bacteriol.">
        <title>Structure and genome organization of AFV2, a novel archaeal lipothrixvirus with unusual terminal and core structures.</title>
        <authorList>
            <person name="Haring M."/>
            <person name="Vestergaard G."/>
            <person name="Brugger K."/>
            <person name="Rachel R."/>
            <person name="Garrett R.A."/>
            <person name="Prangishvili D."/>
        </authorList>
    </citation>
    <scope>NUCLEOTIDE SEQUENCE [GENOMIC DNA]</scope>
</reference>
<sequence>MTSLQEYMVPIVVDGEVPPEIYVALRGTDKDKVKRMWTNANNPFALAKACSRGSAEIVGKPSSVYLKQYRSATYYVLQYPSGKLLLPVDEVDESVVDDIQNELLYVSVVRKNNLYFVTDIEPLVTKSKVERGEELREVADANGVSPDDLPALGYGYVTTSSSKIFTGTDKMIRNDAVNRLSLLMLLRFFTTAKVGGMPVHAFELTTPNTGKTTFAVRNIYLVNWGYIDEAPSFARLVMDAKTSALGLVFRNDGVFIDEIDKYGSNMRDVIHIMLTGMSHGVWKRAKGDTDAPSIVRRIPVYFAGNKDSSTLGTMSTRNYIKNVLVSMKLYQSLVDALLDRIAITIANEAEINASDYVSGYVIADTYLRGYISYVSSQATKMYKDLGIGNGRERQNINAINALCVATTNFDHCDEFAKSVSSGFLV</sequence>
<accession>Q573F4</accession>
<proteinExistence type="predicted"/>
<organism>
    <name type="scientific">Acidianus filamentous virus 2 (isolate Italy/Pozzuoli)</name>
    <name type="common">AFV-2</name>
    <dbReference type="NCBI Taxonomy" id="654910"/>
    <lineage>
        <taxon>Viruses</taxon>
        <taxon>Adnaviria</taxon>
        <taxon>Zilligvirae</taxon>
        <taxon>Taleaviricota</taxon>
        <taxon>Tokiviricetes</taxon>
        <taxon>Ligamenvirales</taxon>
        <taxon>Lipothrixviridae</taxon>
        <taxon>Deltalipothrixvirus</taxon>
        <taxon>Acidianus filamentous virus 2</taxon>
    </lineage>
</organism>
<name>Y425_AFV2P</name>